<accession>Q9VFS2</accession>
<comment type="function">
    <text evidence="4 5 6 7 8">Catalyzes the oxidative cleavage at the 15,15'-double bond of carotenoids and the simultaneous all-trans to 11-cis isomerization of one cleavage product. Carotenoids like 11-cis retinal can promote visual pigment biogenesis in the dark. Essential for the biosynthesis of the 3-hydroxyretinal chromophore of rhodopsin from zeaxanthin and for proper photoreceptor development. Also essential for larval light perception.</text>
</comment>
<comment type="catalytic activity">
    <reaction evidence="3 8">
        <text>all-trans-zeaxanthin + O2 = (3R)-11-cis-3-hydroxyretinal + (3R)-all-trans-3-hydroxyretinal</text>
        <dbReference type="Rhea" id="RHEA:33931"/>
        <dbReference type="ChEBI" id="CHEBI:15379"/>
        <dbReference type="ChEBI" id="CHEBI:27547"/>
        <dbReference type="ChEBI" id="CHEBI:52228"/>
        <dbReference type="ChEBI" id="CHEBI:66898"/>
        <dbReference type="EC" id="1.13.11.65"/>
    </reaction>
</comment>
<comment type="cofactor">
    <cofactor evidence="1">
        <name>Fe(2+)</name>
        <dbReference type="ChEBI" id="CHEBI:29033"/>
    </cofactor>
    <text evidence="1">Binds 1 Fe(2+) ion per subunit.</text>
</comment>
<comment type="pathway">
    <text>Cofactor metabolism; retinol metabolism.</text>
</comment>
<comment type="tissue specificity">
    <text evidence="3 5 6 7 8">Expression follows organogenesis of the larval Bolwig's organ (BO), which mediates larval photophobic behavior. In the adult, expression is restricted exclusively to the brain. Expressed in both neuronal cells and glia cells. Not active within photoreceptors. Active within neuronal cells within the central nervous system.</text>
</comment>
<comment type="similarity">
    <text evidence="9">Belongs to the carotenoid oxygenase family.</text>
</comment>
<evidence type="ECO:0000250" key="1"/>
<evidence type="ECO:0000256" key="2">
    <source>
        <dbReference type="SAM" id="MobiDB-lite"/>
    </source>
</evidence>
<evidence type="ECO:0000269" key="3">
    <source>
    </source>
</evidence>
<evidence type="ECO:0000269" key="4">
    <source>
    </source>
</evidence>
<evidence type="ECO:0000269" key="5">
    <source>
    </source>
</evidence>
<evidence type="ECO:0000269" key="6">
    <source>
    </source>
</evidence>
<evidence type="ECO:0000269" key="7">
    <source>
    </source>
</evidence>
<evidence type="ECO:0000269" key="8">
    <source>
    </source>
</evidence>
<evidence type="ECO:0000305" key="9"/>
<feature type="chain" id="PRO_0000424157" description="Carotenoid isomerooxygenase">
    <location>
        <begin position="1"/>
        <end position="620"/>
    </location>
</feature>
<feature type="region of interest" description="Disordered" evidence="2">
    <location>
        <begin position="440"/>
        <end position="459"/>
    </location>
</feature>
<feature type="compositionally biased region" description="Basic and acidic residues" evidence="2">
    <location>
        <begin position="449"/>
        <end position="459"/>
    </location>
</feature>
<feature type="binding site" evidence="1">
    <location>
        <position position="211"/>
    </location>
    <ligand>
        <name>Fe cation</name>
        <dbReference type="ChEBI" id="CHEBI:24875"/>
        <note>catalytic</note>
    </ligand>
</feature>
<feature type="binding site" evidence="1">
    <location>
        <position position="267"/>
    </location>
    <ligand>
        <name>Fe cation</name>
        <dbReference type="ChEBI" id="CHEBI:24875"/>
        <note>catalytic</note>
    </ligand>
</feature>
<feature type="binding site" evidence="1">
    <location>
        <position position="337"/>
    </location>
    <ligand>
        <name>Fe cation</name>
        <dbReference type="ChEBI" id="CHEBI:24875"/>
        <note>catalytic</note>
    </ligand>
</feature>
<feature type="binding site" evidence="1">
    <location>
        <position position="612"/>
    </location>
    <ligand>
        <name>Fe cation</name>
        <dbReference type="ChEBI" id="CHEBI:24875"/>
        <note>catalytic</note>
    </ligand>
</feature>
<feature type="mutagenesis site" description="In ninaB(P315); abolishes catalytic activity." evidence="4">
    <original>E</original>
    <variation>K</variation>
    <location>
        <position position="280"/>
    </location>
</feature>
<feature type="mutagenesis site" description="In ninaB(P315); no effect." evidence="4">
    <original>M</original>
    <variation>L</variation>
    <location>
        <position position="471"/>
    </location>
</feature>
<feature type="mutagenesis site" description="In ninaB(P315); no effect." evidence="4">
    <original>E</original>
    <variation>A</variation>
    <location>
        <position position="477"/>
    </location>
</feature>
<name>NINAB_DROME</name>
<dbReference type="EC" id="1.13.11.65"/>
<dbReference type="EMBL" id="AJ276682">
    <property type="protein sequence ID" value="CAB93141.1"/>
    <property type="molecule type" value="mRNA"/>
</dbReference>
<dbReference type="EMBL" id="AE014297">
    <property type="protein sequence ID" value="AAF54978.1"/>
    <property type="molecule type" value="Genomic_DNA"/>
</dbReference>
<dbReference type="EMBL" id="AY121617">
    <property type="protein sequence ID" value="AAM51944.1"/>
    <property type="molecule type" value="mRNA"/>
</dbReference>
<dbReference type="RefSeq" id="NP_650307.2">
    <property type="nucleotide sequence ID" value="NM_142050.3"/>
</dbReference>
<dbReference type="SMR" id="Q9VFS2"/>
<dbReference type="FunCoup" id="Q9VFS2">
    <property type="interactions" value="3"/>
</dbReference>
<dbReference type="IntAct" id="Q9VFS2">
    <property type="interactions" value="1"/>
</dbReference>
<dbReference type="STRING" id="7227.FBpp0082288"/>
<dbReference type="PaxDb" id="7227-FBpp0082288"/>
<dbReference type="DNASU" id="41678"/>
<dbReference type="EnsemblMetazoa" id="FBtr0082820">
    <property type="protein sequence ID" value="FBpp0082288"/>
    <property type="gene ID" value="FBgn0002937"/>
</dbReference>
<dbReference type="GeneID" id="41678"/>
<dbReference type="KEGG" id="dme:Dmel_CG9347"/>
<dbReference type="UCSC" id="CG9347-RA">
    <property type="organism name" value="d. melanogaster"/>
</dbReference>
<dbReference type="AGR" id="FB:FBgn0002937"/>
<dbReference type="CTD" id="41678"/>
<dbReference type="FlyBase" id="FBgn0002937">
    <property type="gene designation" value="ninaB"/>
</dbReference>
<dbReference type="VEuPathDB" id="VectorBase:FBgn0002937"/>
<dbReference type="eggNOG" id="KOG1285">
    <property type="taxonomic scope" value="Eukaryota"/>
</dbReference>
<dbReference type="GeneTree" id="ENSGT00950000182913"/>
<dbReference type="HOGENOM" id="CLU_016472_1_1_1"/>
<dbReference type="InParanoid" id="Q9VFS2"/>
<dbReference type="OMA" id="GLTDHYF"/>
<dbReference type="OrthoDB" id="1069523at2759"/>
<dbReference type="PhylomeDB" id="Q9VFS2"/>
<dbReference type="BioCyc" id="MetaCyc:MONOMER-17370"/>
<dbReference type="BRENDA" id="1.13.11.63">
    <property type="organism ID" value="1994"/>
</dbReference>
<dbReference type="BRENDA" id="1.13.11.65">
    <property type="organism ID" value="1994"/>
</dbReference>
<dbReference type="Reactome" id="R-DME-2453902">
    <property type="pathway name" value="The canonical retinoid cycle in rods (twilight vision)"/>
</dbReference>
<dbReference type="Reactome" id="R-DME-975634">
    <property type="pathway name" value="Retinoid metabolism and transport"/>
</dbReference>
<dbReference type="UniPathway" id="UPA00912"/>
<dbReference type="BioGRID-ORCS" id="41678">
    <property type="hits" value="0 hits in 3 CRISPR screens"/>
</dbReference>
<dbReference type="GenomeRNAi" id="41678"/>
<dbReference type="PRO" id="PR:Q9VFS2"/>
<dbReference type="Proteomes" id="UP000000803">
    <property type="component" value="Chromosome 3R"/>
</dbReference>
<dbReference type="Bgee" id="FBgn0002937">
    <property type="expression patterns" value="Expressed in compound eye cone cell in insect head and 33 other cell types or tissues"/>
</dbReference>
<dbReference type="ExpressionAtlas" id="Q9VFS2">
    <property type="expression patterns" value="baseline and differential"/>
</dbReference>
<dbReference type="GO" id="GO:0003834">
    <property type="term" value="F:beta-carotene 15,15'-dioxygenase activity"/>
    <property type="evidence" value="ECO:0000318"/>
    <property type="project" value="GO_Central"/>
</dbReference>
<dbReference type="GO" id="GO:0010436">
    <property type="term" value="F:carotenoid dioxygenase activity"/>
    <property type="evidence" value="ECO:0000318"/>
    <property type="project" value="GO_Central"/>
</dbReference>
<dbReference type="GO" id="GO:0106422">
    <property type="term" value="F:carotenoid isomerooxygenase activity"/>
    <property type="evidence" value="ECO:0000314"/>
    <property type="project" value="FlyBase"/>
</dbReference>
<dbReference type="GO" id="GO:0046872">
    <property type="term" value="F:metal ion binding"/>
    <property type="evidence" value="ECO:0007669"/>
    <property type="project" value="UniProtKB-KW"/>
</dbReference>
<dbReference type="GO" id="GO:0004497">
    <property type="term" value="F:monooxygenase activity"/>
    <property type="evidence" value="ECO:0007669"/>
    <property type="project" value="UniProtKB-KW"/>
</dbReference>
<dbReference type="GO" id="GO:0016121">
    <property type="term" value="P:carotene catabolic process"/>
    <property type="evidence" value="ECO:0000318"/>
    <property type="project" value="GO_Central"/>
</dbReference>
<dbReference type="GO" id="GO:0016119">
    <property type="term" value="P:carotene metabolic process"/>
    <property type="evidence" value="ECO:0000314"/>
    <property type="project" value="FlyBase"/>
</dbReference>
<dbReference type="GO" id="GO:0007602">
    <property type="term" value="P:phototransduction"/>
    <property type="evidence" value="ECO:0000304"/>
    <property type="project" value="FlyBase"/>
</dbReference>
<dbReference type="GO" id="GO:0007604">
    <property type="term" value="P:phototransduction, UV"/>
    <property type="evidence" value="ECO:0000315"/>
    <property type="project" value="FlyBase"/>
</dbReference>
<dbReference type="GO" id="GO:0007603">
    <property type="term" value="P:phototransduction, visible light"/>
    <property type="evidence" value="ECO:0000315"/>
    <property type="project" value="FlyBase"/>
</dbReference>
<dbReference type="GO" id="GO:0042574">
    <property type="term" value="P:retinal metabolic process"/>
    <property type="evidence" value="ECO:0000314"/>
    <property type="project" value="FlyBase"/>
</dbReference>
<dbReference type="GO" id="GO:0042572">
    <property type="term" value="P:retinol metabolic process"/>
    <property type="evidence" value="ECO:0007669"/>
    <property type="project" value="UniProtKB-UniPathway"/>
</dbReference>
<dbReference type="GO" id="GO:0016063">
    <property type="term" value="P:rhodopsin biosynthetic process"/>
    <property type="evidence" value="ECO:0000314"/>
    <property type="project" value="FlyBase"/>
</dbReference>
<dbReference type="GO" id="GO:0035238">
    <property type="term" value="P:vitamin A biosynthetic process"/>
    <property type="evidence" value="ECO:0000314"/>
    <property type="project" value="FlyBase"/>
</dbReference>
<dbReference type="GO" id="GO:0009110">
    <property type="term" value="P:vitamin biosynthetic process"/>
    <property type="evidence" value="ECO:0000315"/>
    <property type="project" value="FlyBase"/>
</dbReference>
<dbReference type="InterPro" id="IPR004294">
    <property type="entry name" value="Carotenoid_Oase"/>
</dbReference>
<dbReference type="PANTHER" id="PTHR10543">
    <property type="entry name" value="BETA-CAROTENE DIOXYGENASE"/>
    <property type="match status" value="1"/>
</dbReference>
<dbReference type="PANTHER" id="PTHR10543:SF24">
    <property type="entry name" value="CAROTENOID ISOMEROOXYGENASE"/>
    <property type="match status" value="1"/>
</dbReference>
<dbReference type="Pfam" id="PF03055">
    <property type="entry name" value="RPE65"/>
    <property type="match status" value="1"/>
</dbReference>
<proteinExistence type="evidence at protein level"/>
<keyword id="KW-0408">Iron</keyword>
<keyword id="KW-0479">Metal-binding</keyword>
<keyword id="KW-0503">Monooxygenase</keyword>
<keyword id="KW-0560">Oxidoreductase</keyword>
<keyword id="KW-1185">Reference proteome</keyword>
<sequence length="620" mass="69932">MAAGVFKSFMRDFFAVKYDEQRNDPQAERLDGNGRLYPNCSSDVWLRSCEREIVDPIEGHHSGHIPKWICGSLLRNGPGSWKVGDMTFGHLFDCSALLHRFAIRNGRVTYQNRFVDTETLRKNRSAQRIVVTEFGTAAVPDPCHSIFDRFAAIFRPDSGTDNSMISIYPFGDQYYTFTETPFMHRINPCTLATEARICTTDFVGVVNHTSHPHVLPSGTVYNLGTTMTRSGPAYTILSFPHGEQMFEDAHVVATLPCRWKLHPGYMHTFGLTDHYFVIVEQPLSVSLTEYIKAQLGGQNLSACLKWFEDRPTLFHLIDRVSGKLVQTYESEAFFYLHIINCFERDGHVVVDICSYRNPEMINCMYLEAIANMQTNPNYATLFRGRPLRFVLPLGTIPPASIAKRGLVKSFSLAGLSAPQVSRTMKHSVSQYADITYMPTNGKQATAGEESPKRDAKRGRYEEENLVNLVTMEGSQAEAFQGTNGIQLRPEMLCDWGCETPRIYYERYMGKNYRYFYAISSDVDAVNPGTLIKVDVWNKSCLTWCEENVYPSEPIFVPSPDPKSEDDGVILASMVLGGLNDRYVGLIVLCAKTMTELGRCDFHTNGPVPKCLHGWFAPNAI</sequence>
<gene>
    <name type="primary">ninaB</name>
    <name type="synonym">beta-diox</name>
    <name type="ORF">CG9347</name>
</gene>
<organism>
    <name type="scientific">Drosophila melanogaster</name>
    <name type="common">Fruit fly</name>
    <dbReference type="NCBI Taxonomy" id="7227"/>
    <lineage>
        <taxon>Eukaryota</taxon>
        <taxon>Metazoa</taxon>
        <taxon>Ecdysozoa</taxon>
        <taxon>Arthropoda</taxon>
        <taxon>Hexapoda</taxon>
        <taxon>Insecta</taxon>
        <taxon>Pterygota</taxon>
        <taxon>Neoptera</taxon>
        <taxon>Endopterygota</taxon>
        <taxon>Diptera</taxon>
        <taxon>Brachycera</taxon>
        <taxon>Muscomorpha</taxon>
        <taxon>Ephydroidea</taxon>
        <taxon>Drosophilidae</taxon>
        <taxon>Drosophila</taxon>
        <taxon>Sophophora</taxon>
    </lineage>
</organism>
<protein>
    <recommendedName>
        <fullName>Carotenoid isomerooxygenase</fullName>
        <ecNumber>1.13.11.65</ecNumber>
    </recommendedName>
    <alternativeName>
        <fullName>Beta-carotene 15,15'-monooxygenase and retinoid isomerase</fullName>
    </alternativeName>
    <alternativeName>
        <fullName>Beta-carotene dioxygenase and retinoid isomerase</fullName>
    </alternativeName>
    <alternativeName>
        <fullName>Neither inactivation nor afterpotential mutant B</fullName>
    </alternativeName>
</protein>
<reference key="1">
    <citation type="journal article" date="2000" name="J. Biol. Chem.">
        <title>Filling the gap in vitamin A research. Molecular identification of an enzyme cleaving beta-carotene to retinal.</title>
        <authorList>
            <person name="von Lintig J."/>
            <person name="Vogt K."/>
        </authorList>
    </citation>
    <scope>NUCLEOTIDE SEQUENCE [MRNA]</scope>
    <scope>CATALYTIC ACTIVITY</scope>
    <scope>TISSUE SPECIFICITY</scope>
</reference>
<reference key="2">
    <citation type="journal article" date="2000" name="Science">
        <title>The genome sequence of Drosophila melanogaster.</title>
        <authorList>
            <person name="Adams M.D."/>
            <person name="Celniker S.E."/>
            <person name="Holt R.A."/>
            <person name="Evans C.A."/>
            <person name="Gocayne J.D."/>
            <person name="Amanatides P.G."/>
            <person name="Scherer S.E."/>
            <person name="Li P.W."/>
            <person name="Hoskins R.A."/>
            <person name="Galle R.F."/>
            <person name="George R.A."/>
            <person name="Lewis S.E."/>
            <person name="Richards S."/>
            <person name="Ashburner M."/>
            <person name="Henderson S.N."/>
            <person name="Sutton G.G."/>
            <person name="Wortman J.R."/>
            <person name="Yandell M.D."/>
            <person name="Zhang Q."/>
            <person name="Chen L.X."/>
            <person name="Brandon R.C."/>
            <person name="Rogers Y.-H.C."/>
            <person name="Blazej R.G."/>
            <person name="Champe M."/>
            <person name="Pfeiffer B.D."/>
            <person name="Wan K.H."/>
            <person name="Doyle C."/>
            <person name="Baxter E.G."/>
            <person name="Helt G."/>
            <person name="Nelson C.R."/>
            <person name="Miklos G.L.G."/>
            <person name="Abril J.F."/>
            <person name="Agbayani A."/>
            <person name="An H.-J."/>
            <person name="Andrews-Pfannkoch C."/>
            <person name="Baldwin D."/>
            <person name="Ballew R.M."/>
            <person name="Basu A."/>
            <person name="Baxendale J."/>
            <person name="Bayraktaroglu L."/>
            <person name="Beasley E.M."/>
            <person name="Beeson K.Y."/>
            <person name="Benos P.V."/>
            <person name="Berman B.P."/>
            <person name="Bhandari D."/>
            <person name="Bolshakov S."/>
            <person name="Borkova D."/>
            <person name="Botchan M.R."/>
            <person name="Bouck J."/>
            <person name="Brokstein P."/>
            <person name="Brottier P."/>
            <person name="Burtis K.C."/>
            <person name="Busam D.A."/>
            <person name="Butler H."/>
            <person name="Cadieu E."/>
            <person name="Center A."/>
            <person name="Chandra I."/>
            <person name="Cherry J.M."/>
            <person name="Cawley S."/>
            <person name="Dahlke C."/>
            <person name="Davenport L.B."/>
            <person name="Davies P."/>
            <person name="de Pablos B."/>
            <person name="Delcher A."/>
            <person name="Deng Z."/>
            <person name="Mays A.D."/>
            <person name="Dew I."/>
            <person name="Dietz S.M."/>
            <person name="Dodson K."/>
            <person name="Doup L.E."/>
            <person name="Downes M."/>
            <person name="Dugan-Rocha S."/>
            <person name="Dunkov B.C."/>
            <person name="Dunn P."/>
            <person name="Durbin K.J."/>
            <person name="Evangelista C.C."/>
            <person name="Ferraz C."/>
            <person name="Ferriera S."/>
            <person name="Fleischmann W."/>
            <person name="Fosler C."/>
            <person name="Gabrielian A.E."/>
            <person name="Garg N.S."/>
            <person name="Gelbart W.M."/>
            <person name="Glasser K."/>
            <person name="Glodek A."/>
            <person name="Gong F."/>
            <person name="Gorrell J.H."/>
            <person name="Gu Z."/>
            <person name="Guan P."/>
            <person name="Harris M."/>
            <person name="Harris N.L."/>
            <person name="Harvey D.A."/>
            <person name="Heiman T.J."/>
            <person name="Hernandez J.R."/>
            <person name="Houck J."/>
            <person name="Hostin D."/>
            <person name="Houston K.A."/>
            <person name="Howland T.J."/>
            <person name="Wei M.-H."/>
            <person name="Ibegwam C."/>
            <person name="Jalali M."/>
            <person name="Kalush F."/>
            <person name="Karpen G.H."/>
            <person name="Ke Z."/>
            <person name="Kennison J.A."/>
            <person name="Ketchum K.A."/>
            <person name="Kimmel B.E."/>
            <person name="Kodira C.D."/>
            <person name="Kraft C.L."/>
            <person name="Kravitz S."/>
            <person name="Kulp D."/>
            <person name="Lai Z."/>
            <person name="Lasko P."/>
            <person name="Lei Y."/>
            <person name="Levitsky A.A."/>
            <person name="Li J.H."/>
            <person name="Li Z."/>
            <person name="Liang Y."/>
            <person name="Lin X."/>
            <person name="Liu X."/>
            <person name="Mattei B."/>
            <person name="McIntosh T.C."/>
            <person name="McLeod M.P."/>
            <person name="McPherson D."/>
            <person name="Merkulov G."/>
            <person name="Milshina N.V."/>
            <person name="Mobarry C."/>
            <person name="Morris J."/>
            <person name="Moshrefi A."/>
            <person name="Mount S.M."/>
            <person name="Moy M."/>
            <person name="Murphy B."/>
            <person name="Murphy L."/>
            <person name="Muzny D.M."/>
            <person name="Nelson D.L."/>
            <person name="Nelson D.R."/>
            <person name="Nelson K.A."/>
            <person name="Nixon K."/>
            <person name="Nusskern D.R."/>
            <person name="Pacleb J.M."/>
            <person name="Palazzolo M."/>
            <person name="Pittman G.S."/>
            <person name="Pan S."/>
            <person name="Pollard J."/>
            <person name="Puri V."/>
            <person name="Reese M.G."/>
            <person name="Reinert K."/>
            <person name="Remington K."/>
            <person name="Saunders R.D.C."/>
            <person name="Scheeler F."/>
            <person name="Shen H."/>
            <person name="Shue B.C."/>
            <person name="Siden-Kiamos I."/>
            <person name="Simpson M."/>
            <person name="Skupski M.P."/>
            <person name="Smith T.J."/>
            <person name="Spier E."/>
            <person name="Spradling A.C."/>
            <person name="Stapleton M."/>
            <person name="Strong R."/>
            <person name="Sun E."/>
            <person name="Svirskas R."/>
            <person name="Tector C."/>
            <person name="Turner R."/>
            <person name="Venter E."/>
            <person name="Wang A.H."/>
            <person name="Wang X."/>
            <person name="Wang Z.-Y."/>
            <person name="Wassarman D.A."/>
            <person name="Weinstock G.M."/>
            <person name="Weissenbach J."/>
            <person name="Williams S.M."/>
            <person name="Woodage T."/>
            <person name="Worley K.C."/>
            <person name="Wu D."/>
            <person name="Yang S."/>
            <person name="Yao Q.A."/>
            <person name="Ye J."/>
            <person name="Yeh R.-F."/>
            <person name="Zaveri J.S."/>
            <person name="Zhan M."/>
            <person name="Zhang G."/>
            <person name="Zhao Q."/>
            <person name="Zheng L."/>
            <person name="Zheng X.H."/>
            <person name="Zhong F.N."/>
            <person name="Zhong W."/>
            <person name="Zhou X."/>
            <person name="Zhu S.C."/>
            <person name="Zhu X."/>
            <person name="Smith H.O."/>
            <person name="Gibbs R.A."/>
            <person name="Myers E.W."/>
            <person name="Rubin G.M."/>
            <person name="Venter J.C."/>
        </authorList>
    </citation>
    <scope>NUCLEOTIDE SEQUENCE [LARGE SCALE GENOMIC DNA]</scope>
    <source>
        <strain>Berkeley</strain>
    </source>
</reference>
<reference key="3">
    <citation type="journal article" date="2002" name="Genome Biol.">
        <title>Annotation of the Drosophila melanogaster euchromatic genome: a systematic review.</title>
        <authorList>
            <person name="Misra S."/>
            <person name="Crosby M.A."/>
            <person name="Mungall C.J."/>
            <person name="Matthews B.B."/>
            <person name="Campbell K.S."/>
            <person name="Hradecky P."/>
            <person name="Huang Y."/>
            <person name="Kaminker J.S."/>
            <person name="Millburn G.H."/>
            <person name="Prochnik S.E."/>
            <person name="Smith C.D."/>
            <person name="Tupy J.L."/>
            <person name="Whitfield E.J."/>
            <person name="Bayraktaroglu L."/>
            <person name="Berman B.P."/>
            <person name="Bettencourt B.R."/>
            <person name="Celniker S.E."/>
            <person name="de Grey A.D.N.J."/>
            <person name="Drysdale R.A."/>
            <person name="Harris N.L."/>
            <person name="Richter J."/>
            <person name="Russo S."/>
            <person name="Schroeder A.J."/>
            <person name="Shu S.Q."/>
            <person name="Stapleton M."/>
            <person name="Yamada C."/>
            <person name="Ashburner M."/>
            <person name="Gelbart W.M."/>
            <person name="Rubin G.M."/>
            <person name="Lewis S.E."/>
        </authorList>
    </citation>
    <scope>GENOME REANNOTATION</scope>
    <source>
        <strain>Berkeley</strain>
    </source>
</reference>
<reference key="4">
    <citation type="journal article" date="2002" name="Genome Biol.">
        <title>A Drosophila full-length cDNA resource.</title>
        <authorList>
            <person name="Stapleton M."/>
            <person name="Carlson J.W."/>
            <person name="Brokstein P."/>
            <person name="Yu C."/>
            <person name="Champe M."/>
            <person name="George R.A."/>
            <person name="Guarin H."/>
            <person name="Kronmiller B."/>
            <person name="Pacleb J.M."/>
            <person name="Park S."/>
            <person name="Wan K.H."/>
            <person name="Rubin G.M."/>
            <person name="Celniker S.E."/>
        </authorList>
    </citation>
    <scope>NUCLEOTIDE SEQUENCE [LARGE SCALE MRNA]</scope>
    <source>
        <strain>Berkeley</strain>
        <tissue>Embryo</tissue>
        <tissue>Head</tissue>
    </source>
</reference>
<reference key="5">
    <citation type="journal article" date="2001" name="Proc. Natl. Acad. Sci. U.S.A.">
        <title>Analysis of the blind Drosophila mutant ninaB identifies the gene encoding the key enzyme for vitamin A formation invivo.</title>
        <authorList>
            <person name="von Lintig J."/>
            <person name="Dreher A."/>
            <person name="Kiefer C."/>
            <person name="Wernet M.F."/>
            <person name="Vogt K."/>
        </authorList>
    </citation>
    <scope>FUNCTION</scope>
    <scope>MUTAGENESIS OF GLU-280; MET-471 AND GLU-477</scope>
</reference>
<reference key="6">
    <citation type="journal article" date="2004" name="J. Biol. Chem.">
        <title>Drosophila ninaB and ninaD act outside of retina to produce rhodopsin chromophore.</title>
        <authorList>
            <person name="Gu G."/>
            <person name="Yang J."/>
            <person name="Mitchell K.A."/>
            <person name="O'Tousa J.E."/>
        </authorList>
    </citation>
    <scope>FUNCTION</scope>
    <scope>TISSUE SPECIFICITY</scope>
</reference>
<reference key="7">
    <citation type="journal article" date="2007" name="J. Cell Biol.">
        <title>Dissection of the pathway required for generation of vitamin A and for Drosophila phototransduction.</title>
        <authorList>
            <person name="Wang T."/>
            <person name="Jiao Y."/>
            <person name="Montell C."/>
        </authorList>
    </citation>
    <scope>FUNCTION</scope>
    <scope>TISSUE SPECIFICITY</scope>
</reference>
<reference key="8">
    <citation type="journal article" date="2007" name="Mol. Cell. Neurosci.">
        <title>Cellular sites of Drosophila NinaB and NinaD activity in vitamin A metabolism.</title>
        <authorList>
            <person name="Yang J."/>
            <person name="O'Tousa J.E."/>
        </authorList>
    </citation>
    <scope>FUNCTION</scope>
    <scope>TISSUE SPECIFICITY</scope>
</reference>
<reference key="9">
    <citation type="journal article" date="2010" name="J. Biol. Chem.">
        <title>NinaB is essential for Drosophila vision but induces retinal degeneration in opsin-deficient photoreceptors.</title>
        <authorList>
            <person name="Voolstra O."/>
            <person name="Oberhauser V."/>
            <person name="Sumser E."/>
            <person name="Meyer N.E."/>
            <person name="Maguire M.E."/>
            <person name="Huber A."/>
            <person name="von Lintig J."/>
        </authorList>
    </citation>
    <scope>FUNCTION</scope>
    <scope>CATALYTIC ACTIVITY</scope>
    <scope>TISSUE SPECIFICITY</scope>
</reference>